<keyword id="KW-0903">Direct protein sequencing</keyword>
<keyword id="KW-0326">Glycosidase</keyword>
<keyword id="KW-0378">Hydrolase</keyword>
<protein>
    <recommendedName>
        <fullName>Beta-hexosaminidase</fullName>
        <ecNumber>3.2.1.52</ecNumber>
    </recommendedName>
    <alternativeName>
        <fullName>Beta-N-acetylhexosaminidase</fullName>
    </alternativeName>
    <alternativeName>
        <fullName>N-acetyl-beta-glucosaminidase</fullName>
    </alternativeName>
    <alternativeName>
        <fullName>NAHA1</fullName>
    </alternativeName>
</protein>
<feature type="chain" id="PRO_0000341515" description="Beta-hexosaminidase">
    <location>
        <begin position="1" status="less than"/>
        <end position="32" status="greater than"/>
    </location>
</feature>
<feature type="domain" description="GH18" evidence="2">
    <location>
        <begin position="1" status="less than"/>
        <end position="32" status="greater than"/>
    </location>
</feature>
<feature type="active site" description="Proton donor" evidence="2">
    <location>
        <position position="21"/>
    </location>
</feature>
<feature type="non-terminal residue" evidence="4">
    <location>
        <position position="1"/>
    </location>
</feature>
<feature type="non-terminal residue" evidence="4">
    <location>
        <position position="32"/>
    </location>
</feature>
<sequence length="32" mass="3557">GKSSSRPLGDATLGDLDFDIEVTQDYWDDLAR</sequence>
<name>NAHA1_PALCA</name>
<reference evidence="5" key="1">
    <citation type="journal article" date="2008" name="Protein Expr. Purif.">
        <title>Identification of a novel beta-N-acetylhexosaminidase (Pcb-NAHA1) from marine Zoanthid Palythoa caribaeorum (Cnidaria, Anthozoa, Zoanthidea).</title>
        <authorList>
            <person name="Souza D.S.L."/>
            <person name="Grossi-de-Sa M.F."/>
            <person name="Silva L.P."/>
            <person name="Franco O.L."/>
            <person name="Gomes-Junior J.E."/>
            <person name="Oliveira G.R."/>
            <person name="Rocha T.L."/>
            <person name="Magalhaes C.P."/>
            <person name="Marra B.M."/>
            <person name="Grossi-de-Sa M."/>
            <person name="Romano E."/>
            <person name="de Sa C.M."/>
            <person name="Kombrink E."/>
            <person name="Jimenez A.V."/>
            <person name="Abreu L.R.D."/>
        </authorList>
    </citation>
    <scope>PROTEIN SEQUENCE</scope>
    <scope>FUNCTION</scope>
    <scope>CATALYTIC ACTIVITY</scope>
    <scope>ACTIVITY REGULATION</scope>
    <scope>BIOPHYSICOCHEMICAL PROPERTIES</scope>
</reference>
<proteinExistence type="evidence at protein level"/>
<organism>
    <name type="scientific">Palythoa caribaeorum</name>
    <name type="common">White encrusting zoanthid coral</name>
    <dbReference type="NCBI Taxonomy" id="134933"/>
    <lineage>
        <taxon>Eukaryota</taxon>
        <taxon>Metazoa</taxon>
        <taxon>Cnidaria</taxon>
        <taxon>Anthozoa</taxon>
        <taxon>Hexacorallia</taxon>
        <taxon>Zoantharia</taxon>
        <taxon>Sphenopidae</taxon>
        <taxon>Palythoa</taxon>
    </lineage>
</organism>
<comment type="function">
    <text evidence="3">Preferentially hydrolyzes pNP-GlcNAc, hydrolyzes pNP-GalNAc to a lesser extent.</text>
</comment>
<comment type="catalytic activity">
    <reaction evidence="3">
        <text>Hydrolysis of terminal non-reducing N-acetyl-D-hexosamine residues in N-acetyl-beta-D-hexosaminides.</text>
        <dbReference type="EC" id="3.2.1.52"/>
    </reaction>
</comment>
<comment type="activity regulation">
    <text evidence="3">Activity is decreased by HgCl(2) and maltose. Activity is stimulated by Na(2)SeO(4), BaCl(2), MgCl(2), chondroitin 6-sulfate and phenylmethylsulfonyl fluoride.</text>
</comment>
<comment type="biophysicochemical properties">
    <kinetics>
        <KM evidence="3">0.53 mM for pNP-GlcNAc</KM>
        <Vmax evidence="3">88.1 umol/h/mg enzyme with pNP-Glc-NAc as substrate</Vmax>
    </kinetics>
    <phDependence>
        <text evidence="3">Optimum pH is 5.0. Active over a broad range of pH values.</text>
    </phDependence>
    <temperatureDependence>
        <text evidence="3">Has maximum activity at 45 to 60 degrees Celsius. Inactive at temperatures of 70 degrees Celsius and above.</text>
    </temperatureDependence>
</comment>
<comment type="similarity">
    <text evidence="1">Belongs to the glycosyl hydrolase 18 family. Chitinase class II subfamily.</text>
</comment>
<accession>P85512</accession>
<dbReference type="EC" id="3.2.1.52"/>
<dbReference type="SMR" id="P85512"/>
<dbReference type="GO" id="GO:0004563">
    <property type="term" value="F:beta-N-acetylhexosaminidase activity"/>
    <property type="evidence" value="ECO:0007669"/>
    <property type="project" value="UniProtKB-EC"/>
</dbReference>
<dbReference type="GO" id="GO:0005975">
    <property type="term" value="P:carbohydrate metabolic process"/>
    <property type="evidence" value="ECO:0007669"/>
    <property type="project" value="InterPro"/>
</dbReference>
<dbReference type="InterPro" id="IPR001223">
    <property type="entry name" value="Glyco_hydro18_cat"/>
</dbReference>
<dbReference type="PROSITE" id="PS51910">
    <property type="entry name" value="GH18_2"/>
    <property type="match status" value="1"/>
</dbReference>
<evidence type="ECO:0000255" key="1"/>
<evidence type="ECO:0000255" key="2">
    <source>
        <dbReference type="PROSITE-ProRule" id="PRU01258"/>
    </source>
</evidence>
<evidence type="ECO:0000269" key="3">
    <source>
    </source>
</evidence>
<evidence type="ECO:0000303" key="4">
    <source>
    </source>
</evidence>
<evidence type="ECO:0000305" key="5"/>